<name>RL34_METS3</name>
<comment type="similarity">
    <text evidence="1">Belongs to the eukaryotic ribosomal protein eL34 family.</text>
</comment>
<feature type="chain" id="PRO_1000006929" description="Large ribosomal subunit protein eL34">
    <location>
        <begin position="1"/>
        <end position="88"/>
    </location>
</feature>
<accession>A5UL62</accession>
<sequence length="88" mass="10247">MPANRYRSRSYKRVYKNTPGGENVLRYKKKKPSKHVCAECGKLLHGVPRGRPYEINKLAKSHKRPNRPYGGYLCSSCARKHFKNEARK</sequence>
<evidence type="ECO:0000255" key="1">
    <source>
        <dbReference type="HAMAP-Rule" id="MF_00349"/>
    </source>
</evidence>
<evidence type="ECO:0000305" key="2"/>
<gene>
    <name evidence="1" type="primary">rpl34e</name>
    <name type="ordered locus">Msm_0735</name>
</gene>
<proteinExistence type="inferred from homology"/>
<keyword id="KW-0687">Ribonucleoprotein</keyword>
<keyword id="KW-0689">Ribosomal protein</keyword>
<organism>
    <name type="scientific">Methanobrevibacter smithii (strain ATCC 35061 / DSM 861 / OCM 144 / PS)</name>
    <dbReference type="NCBI Taxonomy" id="420247"/>
    <lineage>
        <taxon>Archaea</taxon>
        <taxon>Methanobacteriati</taxon>
        <taxon>Methanobacteriota</taxon>
        <taxon>Methanomada group</taxon>
        <taxon>Methanobacteria</taxon>
        <taxon>Methanobacteriales</taxon>
        <taxon>Methanobacteriaceae</taxon>
        <taxon>Methanobrevibacter</taxon>
    </lineage>
</organism>
<protein>
    <recommendedName>
        <fullName evidence="1">Large ribosomal subunit protein eL34</fullName>
    </recommendedName>
    <alternativeName>
        <fullName evidence="2">50S ribosomal protein L34e</fullName>
    </alternativeName>
</protein>
<dbReference type="EMBL" id="CP000678">
    <property type="protein sequence ID" value="ABQ86940.1"/>
    <property type="molecule type" value="Genomic_DNA"/>
</dbReference>
<dbReference type="RefSeq" id="WP_004033246.1">
    <property type="nucleotide sequence ID" value="NZ_CP117965.1"/>
</dbReference>
<dbReference type="SMR" id="A5UL62"/>
<dbReference type="STRING" id="420247.Msm_0735"/>
<dbReference type="EnsemblBacteria" id="ABQ86940">
    <property type="protein sequence ID" value="ABQ86940"/>
    <property type="gene ID" value="Msm_0735"/>
</dbReference>
<dbReference type="KEGG" id="msi:Msm_0735"/>
<dbReference type="PATRIC" id="fig|420247.28.peg.732"/>
<dbReference type="eggNOG" id="arCOG04168">
    <property type="taxonomic scope" value="Archaea"/>
</dbReference>
<dbReference type="HOGENOM" id="CLU_118652_2_0_2"/>
<dbReference type="Proteomes" id="UP000001992">
    <property type="component" value="Chromosome"/>
</dbReference>
<dbReference type="GO" id="GO:1990904">
    <property type="term" value="C:ribonucleoprotein complex"/>
    <property type="evidence" value="ECO:0007669"/>
    <property type="project" value="UniProtKB-KW"/>
</dbReference>
<dbReference type="GO" id="GO:0005840">
    <property type="term" value="C:ribosome"/>
    <property type="evidence" value="ECO:0007669"/>
    <property type="project" value="UniProtKB-KW"/>
</dbReference>
<dbReference type="GO" id="GO:0003735">
    <property type="term" value="F:structural constituent of ribosome"/>
    <property type="evidence" value="ECO:0007669"/>
    <property type="project" value="InterPro"/>
</dbReference>
<dbReference type="GO" id="GO:0006412">
    <property type="term" value="P:translation"/>
    <property type="evidence" value="ECO:0007669"/>
    <property type="project" value="UniProtKB-UniRule"/>
</dbReference>
<dbReference type="Gene3D" id="6.20.340.10">
    <property type="match status" value="1"/>
</dbReference>
<dbReference type="HAMAP" id="MF_00349">
    <property type="entry name" value="Ribosomal_eL34"/>
    <property type="match status" value="1"/>
</dbReference>
<dbReference type="InterPro" id="IPR008195">
    <property type="entry name" value="Ribosomal_eL34"/>
</dbReference>
<dbReference type="InterPro" id="IPR038562">
    <property type="entry name" value="Ribosomal_eL34_C_sf"/>
</dbReference>
<dbReference type="InterPro" id="IPR047868">
    <property type="entry name" value="Ribosomal_L34e_arc-type"/>
</dbReference>
<dbReference type="NCBIfam" id="NF003143">
    <property type="entry name" value="PRK04059.1"/>
    <property type="match status" value="1"/>
</dbReference>
<dbReference type="PANTHER" id="PTHR10759">
    <property type="entry name" value="60S RIBOSOMAL PROTEIN L34"/>
    <property type="match status" value="1"/>
</dbReference>
<dbReference type="Pfam" id="PF01199">
    <property type="entry name" value="Ribosomal_L34e"/>
    <property type="match status" value="1"/>
</dbReference>
<dbReference type="PRINTS" id="PR01250">
    <property type="entry name" value="RIBOSOMALL34"/>
</dbReference>
<reference key="1">
    <citation type="journal article" date="2007" name="Proc. Natl. Acad. Sci. U.S.A.">
        <title>Genomic and metabolic adaptations of Methanobrevibacter smithii to the human gut.</title>
        <authorList>
            <person name="Samuel B.S."/>
            <person name="Hansen E.E."/>
            <person name="Manchester J.K."/>
            <person name="Coutinho P.M."/>
            <person name="Henrissat B."/>
            <person name="Fulton R."/>
            <person name="Latreille P."/>
            <person name="Kim K."/>
            <person name="Wilson R.K."/>
            <person name="Gordon J.I."/>
        </authorList>
    </citation>
    <scope>NUCLEOTIDE SEQUENCE [LARGE SCALE GENOMIC DNA]</scope>
    <source>
        <strain>ATCC 35061 / DSM 861 / OCM 144 / PS</strain>
    </source>
</reference>